<dbReference type="EMBL" id="CH477487">
    <property type="protein sequence ID" value="EAT40119.1"/>
    <property type="molecule type" value="Genomic_DNA"/>
</dbReference>
<dbReference type="RefSeq" id="XP_001658958.1">
    <property type="nucleotide sequence ID" value="XM_001658908.1"/>
</dbReference>
<dbReference type="SMR" id="Q16ZN9"/>
<dbReference type="FunCoup" id="Q16ZN9">
    <property type="interactions" value="1380"/>
</dbReference>
<dbReference type="STRING" id="7159.Q16ZN9"/>
<dbReference type="PaxDb" id="7159-AAEL008135-PA"/>
<dbReference type="GeneID" id="5570156"/>
<dbReference type="KEGG" id="aag:5570156"/>
<dbReference type="CTD" id="83548"/>
<dbReference type="VEuPathDB" id="VectorBase:AAEL008135"/>
<dbReference type="eggNOG" id="KOG2604">
    <property type="taxonomic scope" value="Eukaryota"/>
</dbReference>
<dbReference type="HOGENOM" id="CLU_011639_1_1_1"/>
<dbReference type="InParanoid" id="Q16ZN9"/>
<dbReference type="OMA" id="DEFELWG"/>
<dbReference type="OrthoDB" id="296793at2759"/>
<dbReference type="PhylomeDB" id="Q16ZN9"/>
<dbReference type="Proteomes" id="UP000008820">
    <property type="component" value="Unassembled WGS sequence"/>
</dbReference>
<dbReference type="Proteomes" id="UP000682892">
    <property type="component" value="Chromosome 1"/>
</dbReference>
<dbReference type="GO" id="GO:0005801">
    <property type="term" value="C:cis-Golgi network"/>
    <property type="evidence" value="ECO:0007669"/>
    <property type="project" value="InterPro"/>
</dbReference>
<dbReference type="GO" id="GO:0000139">
    <property type="term" value="C:Golgi membrane"/>
    <property type="evidence" value="ECO:0007669"/>
    <property type="project" value="UniProtKB-SubCell"/>
</dbReference>
<dbReference type="GO" id="GO:0017119">
    <property type="term" value="C:Golgi transport complex"/>
    <property type="evidence" value="ECO:0000250"/>
    <property type="project" value="UniProtKB"/>
</dbReference>
<dbReference type="GO" id="GO:0006888">
    <property type="term" value="P:endoplasmic reticulum to Golgi vesicle-mediated transport"/>
    <property type="evidence" value="ECO:0000250"/>
    <property type="project" value="UniProtKB"/>
</dbReference>
<dbReference type="GO" id="GO:0007030">
    <property type="term" value="P:Golgi organization"/>
    <property type="evidence" value="ECO:0007669"/>
    <property type="project" value="TreeGrafter"/>
</dbReference>
<dbReference type="GO" id="GO:0006891">
    <property type="term" value="P:intra-Golgi vesicle-mediated transport"/>
    <property type="evidence" value="ECO:0000250"/>
    <property type="project" value="UniProtKB"/>
</dbReference>
<dbReference type="GO" id="GO:0006886">
    <property type="term" value="P:intracellular protein transport"/>
    <property type="evidence" value="ECO:0007669"/>
    <property type="project" value="InterPro"/>
</dbReference>
<dbReference type="InterPro" id="IPR048685">
    <property type="entry name" value="COG3_C"/>
</dbReference>
<dbReference type="InterPro" id="IPR048320">
    <property type="entry name" value="COG3_N"/>
</dbReference>
<dbReference type="InterPro" id="IPR007265">
    <property type="entry name" value="COG_su3"/>
</dbReference>
<dbReference type="PANTHER" id="PTHR13302">
    <property type="entry name" value="CONSERVED OLIGOMERIC GOLGI COMPLEX COMPONENT 3"/>
    <property type="match status" value="1"/>
</dbReference>
<dbReference type="PANTHER" id="PTHR13302:SF8">
    <property type="entry name" value="CONSERVED OLIGOMERIC GOLGI COMPLEX SUBUNIT 3"/>
    <property type="match status" value="1"/>
</dbReference>
<dbReference type="Pfam" id="PF20671">
    <property type="entry name" value="COG3_C"/>
    <property type="match status" value="1"/>
</dbReference>
<dbReference type="Pfam" id="PF04136">
    <property type="entry name" value="COG3_N"/>
    <property type="match status" value="1"/>
</dbReference>
<feature type="chain" id="PRO_0000306270" description="Conserved oligomeric Golgi complex subunit 3">
    <location>
        <begin position="1"/>
        <end position="899"/>
    </location>
</feature>
<organism>
    <name type="scientific">Aedes aegypti</name>
    <name type="common">Yellowfever mosquito</name>
    <name type="synonym">Culex aegypti</name>
    <dbReference type="NCBI Taxonomy" id="7159"/>
    <lineage>
        <taxon>Eukaryota</taxon>
        <taxon>Metazoa</taxon>
        <taxon>Ecdysozoa</taxon>
        <taxon>Arthropoda</taxon>
        <taxon>Hexapoda</taxon>
        <taxon>Insecta</taxon>
        <taxon>Pterygota</taxon>
        <taxon>Neoptera</taxon>
        <taxon>Endopterygota</taxon>
        <taxon>Diptera</taxon>
        <taxon>Nematocera</taxon>
        <taxon>Culicoidea</taxon>
        <taxon>Culicidae</taxon>
        <taxon>Culicinae</taxon>
        <taxon>Aedini</taxon>
        <taxon>Aedes</taxon>
        <taxon>Stegomyia</taxon>
    </lineage>
</organism>
<sequence length="899" mass="100759">MDDVATMKSENANLRKIQSRLLQWEQKDNPLAPLSSAQNEFINRLADSLTGATSPGANPLMESQELSLECKTTLVDFKNSGSVIDSTQDFLSWYNSIDSEILEHYDDVYLDYYGQLKQRSVECDKLLEEIDVSLESLQKLTNEYKFVSEKTSSLHQASENLLQDQTKLNEIGEEIRRRLKYFSQAESIYQRLQNPTFSVSNDTFVEILNTIDECLEYMRVNPGFSEAFAYGVKYRNCLSKATQMMRNYVSNILTNATAQILGPQRSETGMEQGSEAAFALYYGKFQASAPRVKRITGMIEGRLDRSVEYEQLLAALHQQFLANRATIMSSGVEQAIRDLSKKHKGDHCALVRSACAFMVHVCQDEHRLFFQFFTNSSPQLTAYMEGLCTILYDTLRPFIIRIDHLETLAEICSILRVEMLDEHVTYNPESLEAFAKIVYQLLQDVQERIGFRAQNYLESDILNYRPSAGDLAYPEKLEMMESIALSLQENYLRRADSRSSIVSMTSLASQEVESINQQAEQASKSRASNSPADLHGMWYPTVRRTLVCLSRLYRCIDRAIFQSLSQQALAYCIQSVSNAAAQISQKKTSIDGELFEIKHLLILREQIAPFRVDFTVKETSLDFSKVKTAAFELLQKRKQLFALGSNNALLEFLLDGTPQVKEQLLDSRKDVDRQLKMVCEMFIKDATRQLVGPILNFIDTAQNHVKQSAASGSSQPGAKQQQQQGLALRMAAFAAPQQISSIIQESIRNIKTKLGALQRSMQLYLANKDTEFILFRPIRNNIIGSFVKLEQLLTTNSYSKDDLTVVSCPSAEQISVLLSSVNLSGTVGAEPFGGIQRKISASSMGGNGGASVKPPIEKKVSFDSGANTVVQIEAGSEAVEVSAEEASVEEALEGKIEAE</sequence>
<comment type="function">
    <text evidence="4">Involved in ER-Golgi transport.</text>
</comment>
<comment type="subunit">
    <text evidence="2">Component of the conserved oligomeric Golgi complex which is composed of eight different subunits and is required for normal Golgi morphology and localization.</text>
</comment>
<comment type="subcellular location">
    <subcellularLocation>
        <location evidence="1">Golgi apparatus membrane</location>
        <topology evidence="1">Peripheral membrane protein</topology>
        <orientation evidence="1">Cytoplasmic side</orientation>
    </subcellularLocation>
</comment>
<comment type="similarity">
    <text evidence="5">Belongs to the COG3 family.</text>
</comment>
<proteinExistence type="inferred from homology"/>
<evidence type="ECO:0000250" key="1"/>
<evidence type="ECO:0000250" key="2">
    <source>
        <dbReference type="UniProtKB" id="Q14746"/>
    </source>
</evidence>
<evidence type="ECO:0000250" key="3">
    <source>
        <dbReference type="UniProtKB" id="Q961G1"/>
    </source>
</evidence>
<evidence type="ECO:0000250" key="4">
    <source>
        <dbReference type="UniProtKB" id="Q96JB2"/>
    </source>
</evidence>
<evidence type="ECO:0000255" key="5"/>
<evidence type="ECO:0000312" key="6">
    <source>
        <dbReference type="EMBL" id="EAT40119.1"/>
    </source>
</evidence>
<gene>
    <name evidence="3" type="primary">Cog3</name>
    <name type="ORF">AAEL008135</name>
</gene>
<keyword id="KW-0333">Golgi apparatus</keyword>
<keyword id="KW-0472">Membrane</keyword>
<keyword id="KW-0653">Protein transport</keyword>
<keyword id="KW-1185">Reference proteome</keyword>
<keyword id="KW-0813">Transport</keyword>
<accession>Q16ZN9</accession>
<protein>
    <recommendedName>
        <fullName>Conserved oligomeric Golgi complex subunit 3</fullName>
        <shortName>COG complex subunit 3</shortName>
    </recommendedName>
    <alternativeName>
        <fullName>Component of oligomeric Golgi complex 3</fullName>
    </alternativeName>
</protein>
<reference evidence="6" key="1">
    <citation type="journal article" date="2007" name="Science">
        <title>Genome sequence of Aedes aegypti, a major arbovirus vector.</title>
        <authorList>
            <person name="Nene V."/>
            <person name="Wortman J.R."/>
            <person name="Lawson D."/>
            <person name="Haas B.J."/>
            <person name="Kodira C.D."/>
            <person name="Tu Z.J."/>
            <person name="Loftus B.J."/>
            <person name="Xi Z."/>
            <person name="Megy K."/>
            <person name="Grabherr M."/>
            <person name="Ren Q."/>
            <person name="Zdobnov E.M."/>
            <person name="Lobo N.F."/>
            <person name="Campbell K.S."/>
            <person name="Brown S.E."/>
            <person name="Bonaldo M.F."/>
            <person name="Zhu J."/>
            <person name="Sinkins S.P."/>
            <person name="Hogenkamp D.G."/>
            <person name="Amedeo P."/>
            <person name="Arensburger P."/>
            <person name="Atkinson P.W."/>
            <person name="Bidwell S.L."/>
            <person name="Biedler J."/>
            <person name="Birney E."/>
            <person name="Bruggner R.V."/>
            <person name="Costas J."/>
            <person name="Coy M.R."/>
            <person name="Crabtree J."/>
            <person name="Crawford M."/>
            <person name="DeBruyn B."/>
            <person name="DeCaprio D."/>
            <person name="Eiglmeier K."/>
            <person name="Eisenstadt E."/>
            <person name="El-Dorry H."/>
            <person name="Gelbart W.M."/>
            <person name="Gomes S.L."/>
            <person name="Hammond M."/>
            <person name="Hannick L.I."/>
            <person name="Hogan J.R."/>
            <person name="Holmes M.H."/>
            <person name="Jaffe D."/>
            <person name="Johnston S.J."/>
            <person name="Kennedy R.C."/>
            <person name="Koo H."/>
            <person name="Kravitz S."/>
            <person name="Kriventseva E.V."/>
            <person name="Kulp D."/>
            <person name="Labutti K."/>
            <person name="Lee E."/>
            <person name="Li S."/>
            <person name="Lovin D.D."/>
            <person name="Mao C."/>
            <person name="Mauceli E."/>
            <person name="Menck C.F."/>
            <person name="Miller J.R."/>
            <person name="Montgomery P."/>
            <person name="Mori A."/>
            <person name="Nascimento A.L."/>
            <person name="Naveira H.F."/>
            <person name="Nusbaum C."/>
            <person name="O'Leary S.B."/>
            <person name="Orvis J."/>
            <person name="Pertea M."/>
            <person name="Quesneville H."/>
            <person name="Reidenbach K.R."/>
            <person name="Rogers Y.-H.C."/>
            <person name="Roth C.W."/>
            <person name="Schneider J.R."/>
            <person name="Schatz M."/>
            <person name="Shumway M."/>
            <person name="Stanke M."/>
            <person name="Stinson E.O."/>
            <person name="Tubio J.M.C."/>
            <person name="Vanzee J.P."/>
            <person name="Verjovski-Almeida S."/>
            <person name="Werner D."/>
            <person name="White O.R."/>
            <person name="Wyder S."/>
            <person name="Zeng Q."/>
            <person name="Zhao Q."/>
            <person name="Zhao Y."/>
            <person name="Hill C.A."/>
            <person name="Raikhel A.S."/>
            <person name="Soares M.B."/>
            <person name="Knudson D.L."/>
            <person name="Lee N.H."/>
            <person name="Galagan J."/>
            <person name="Salzberg S.L."/>
            <person name="Paulsen I.T."/>
            <person name="Dimopoulos G."/>
            <person name="Collins F.H."/>
            <person name="Bruce B."/>
            <person name="Fraser-Liggett C.M."/>
            <person name="Severson D.W."/>
        </authorList>
    </citation>
    <scope>NUCLEOTIDE SEQUENCE [LARGE SCALE GENOMIC DNA]</scope>
    <source>
        <strain>LVPib12</strain>
    </source>
</reference>
<name>COG3_AEDAE</name>